<protein>
    <recommendedName>
        <fullName evidence="1">UDP-N-acetylmuramoylalanine--D-glutamate ligase</fullName>
        <ecNumber evidence="1">6.3.2.9</ecNumber>
    </recommendedName>
    <alternativeName>
        <fullName evidence="1">D-glutamic acid-adding enzyme</fullName>
    </alternativeName>
    <alternativeName>
        <fullName evidence="1">UDP-N-acetylmuramoyl-L-alanyl-D-glutamate synthetase</fullName>
    </alternativeName>
</protein>
<evidence type="ECO:0000255" key="1">
    <source>
        <dbReference type="HAMAP-Rule" id="MF_00639"/>
    </source>
</evidence>
<sequence>MELNDKKVLVVGLAKTGVACARFLASRGARVTVTDMRDEAALAGQLALLEGRGIRRELTRHDAGTFTQSHLIVVSPGVPRTLPQLVMAHEAGVEIISEIELASRFIQAPLVAITGTNGKTTATTITGDIFIKNGFRTFVGGNIGNPLIELLESAEPVERVVAEISSFQLEWIRAFRPAVAALLNLSEDHLDRYASYREYIEAKLRIFENQTADDYAVVNADDELVMEHSRGLRACLFPFSRKQELDEGIFHREGLIVWRHNGREERFPTAGFRLQGVHNLENIMAALACSLLLECRPTESLACVREFEALHHRMEFVRELNGVRWYEDSKATNVGSVEKALESFDAITLIAGGKDKGGSYSPLSRLVRERVRHLVLIGEAAGRMQEELGTLTDTRRAATLEEAVSLAAELTAPGGTVLMSPACSSFDMFRDYEERAQRYIAAVKAL</sequence>
<reference key="1">
    <citation type="submission" date="2006-10" db="EMBL/GenBank/DDBJ databases">
        <title>Complete sequence of chromosome of Pelobacter propionicus DSM 2379.</title>
        <authorList>
            <consortium name="US DOE Joint Genome Institute"/>
            <person name="Copeland A."/>
            <person name="Lucas S."/>
            <person name="Lapidus A."/>
            <person name="Barry K."/>
            <person name="Detter J.C."/>
            <person name="Glavina del Rio T."/>
            <person name="Hammon N."/>
            <person name="Israni S."/>
            <person name="Dalin E."/>
            <person name="Tice H."/>
            <person name="Pitluck S."/>
            <person name="Saunders E."/>
            <person name="Brettin T."/>
            <person name="Bruce D."/>
            <person name="Han C."/>
            <person name="Tapia R."/>
            <person name="Schmutz J."/>
            <person name="Larimer F."/>
            <person name="Land M."/>
            <person name="Hauser L."/>
            <person name="Kyrpides N."/>
            <person name="Kim E."/>
            <person name="Lovley D."/>
            <person name="Richardson P."/>
        </authorList>
    </citation>
    <scope>NUCLEOTIDE SEQUENCE [LARGE SCALE GENOMIC DNA]</scope>
    <source>
        <strain>DSM 2379 / NBRC 103807 / OttBd1</strain>
    </source>
</reference>
<organism>
    <name type="scientific">Pelobacter propionicus (strain DSM 2379 / NBRC 103807 / OttBd1)</name>
    <dbReference type="NCBI Taxonomy" id="338966"/>
    <lineage>
        <taxon>Bacteria</taxon>
        <taxon>Pseudomonadati</taxon>
        <taxon>Thermodesulfobacteriota</taxon>
        <taxon>Desulfuromonadia</taxon>
        <taxon>Desulfuromonadales</taxon>
        <taxon>Desulfuromonadaceae</taxon>
        <taxon>Pelobacter</taxon>
    </lineage>
</organism>
<proteinExistence type="inferred from homology"/>
<comment type="function">
    <text evidence="1">Cell wall formation. Catalyzes the addition of glutamate to the nucleotide precursor UDP-N-acetylmuramoyl-L-alanine (UMA).</text>
</comment>
<comment type="catalytic activity">
    <reaction evidence="1">
        <text>UDP-N-acetyl-alpha-D-muramoyl-L-alanine + D-glutamate + ATP = UDP-N-acetyl-alpha-D-muramoyl-L-alanyl-D-glutamate + ADP + phosphate + H(+)</text>
        <dbReference type="Rhea" id="RHEA:16429"/>
        <dbReference type="ChEBI" id="CHEBI:15378"/>
        <dbReference type="ChEBI" id="CHEBI:29986"/>
        <dbReference type="ChEBI" id="CHEBI:30616"/>
        <dbReference type="ChEBI" id="CHEBI:43474"/>
        <dbReference type="ChEBI" id="CHEBI:83898"/>
        <dbReference type="ChEBI" id="CHEBI:83900"/>
        <dbReference type="ChEBI" id="CHEBI:456216"/>
        <dbReference type="EC" id="6.3.2.9"/>
    </reaction>
</comment>
<comment type="pathway">
    <text evidence="1">Cell wall biogenesis; peptidoglycan biosynthesis.</text>
</comment>
<comment type="subcellular location">
    <subcellularLocation>
        <location evidence="1">Cytoplasm</location>
    </subcellularLocation>
</comment>
<comment type="similarity">
    <text evidence="1">Belongs to the MurCDEF family.</text>
</comment>
<dbReference type="EC" id="6.3.2.9" evidence="1"/>
<dbReference type="EMBL" id="CP000482">
    <property type="protein sequence ID" value="ABL00884.1"/>
    <property type="molecule type" value="Genomic_DNA"/>
</dbReference>
<dbReference type="RefSeq" id="WP_011737101.1">
    <property type="nucleotide sequence ID" value="NC_008609.1"/>
</dbReference>
<dbReference type="SMR" id="A1AU63"/>
<dbReference type="STRING" id="338966.Ppro_3291"/>
<dbReference type="KEGG" id="ppd:Ppro_3291"/>
<dbReference type="eggNOG" id="COG0771">
    <property type="taxonomic scope" value="Bacteria"/>
</dbReference>
<dbReference type="HOGENOM" id="CLU_032540_0_0_7"/>
<dbReference type="OrthoDB" id="9809796at2"/>
<dbReference type="UniPathway" id="UPA00219"/>
<dbReference type="Proteomes" id="UP000006732">
    <property type="component" value="Chromosome"/>
</dbReference>
<dbReference type="GO" id="GO:0005737">
    <property type="term" value="C:cytoplasm"/>
    <property type="evidence" value="ECO:0007669"/>
    <property type="project" value="UniProtKB-SubCell"/>
</dbReference>
<dbReference type="GO" id="GO:0005524">
    <property type="term" value="F:ATP binding"/>
    <property type="evidence" value="ECO:0007669"/>
    <property type="project" value="UniProtKB-UniRule"/>
</dbReference>
<dbReference type="GO" id="GO:0008764">
    <property type="term" value="F:UDP-N-acetylmuramoylalanine-D-glutamate ligase activity"/>
    <property type="evidence" value="ECO:0007669"/>
    <property type="project" value="UniProtKB-UniRule"/>
</dbReference>
<dbReference type="GO" id="GO:0051301">
    <property type="term" value="P:cell division"/>
    <property type="evidence" value="ECO:0007669"/>
    <property type="project" value="UniProtKB-KW"/>
</dbReference>
<dbReference type="GO" id="GO:0071555">
    <property type="term" value="P:cell wall organization"/>
    <property type="evidence" value="ECO:0007669"/>
    <property type="project" value="UniProtKB-KW"/>
</dbReference>
<dbReference type="GO" id="GO:0009252">
    <property type="term" value="P:peptidoglycan biosynthetic process"/>
    <property type="evidence" value="ECO:0007669"/>
    <property type="project" value="UniProtKB-UniRule"/>
</dbReference>
<dbReference type="GO" id="GO:0008360">
    <property type="term" value="P:regulation of cell shape"/>
    <property type="evidence" value="ECO:0007669"/>
    <property type="project" value="UniProtKB-KW"/>
</dbReference>
<dbReference type="Gene3D" id="3.90.190.20">
    <property type="entry name" value="Mur ligase, C-terminal domain"/>
    <property type="match status" value="1"/>
</dbReference>
<dbReference type="Gene3D" id="3.40.1190.10">
    <property type="entry name" value="Mur-like, catalytic domain"/>
    <property type="match status" value="1"/>
</dbReference>
<dbReference type="Gene3D" id="3.40.50.720">
    <property type="entry name" value="NAD(P)-binding Rossmann-like Domain"/>
    <property type="match status" value="1"/>
</dbReference>
<dbReference type="HAMAP" id="MF_00639">
    <property type="entry name" value="MurD"/>
    <property type="match status" value="1"/>
</dbReference>
<dbReference type="InterPro" id="IPR036565">
    <property type="entry name" value="Mur-like_cat_sf"/>
</dbReference>
<dbReference type="InterPro" id="IPR004101">
    <property type="entry name" value="Mur_ligase_C"/>
</dbReference>
<dbReference type="InterPro" id="IPR036615">
    <property type="entry name" value="Mur_ligase_C_dom_sf"/>
</dbReference>
<dbReference type="InterPro" id="IPR013221">
    <property type="entry name" value="Mur_ligase_cen"/>
</dbReference>
<dbReference type="InterPro" id="IPR005762">
    <property type="entry name" value="MurD"/>
</dbReference>
<dbReference type="NCBIfam" id="TIGR01087">
    <property type="entry name" value="murD"/>
    <property type="match status" value="1"/>
</dbReference>
<dbReference type="PANTHER" id="PTHR43692">
    <property type="entry name" value="UDP-N-ACETYLMURAMOYLALANINE--D-GLUTAMATE LIGASE"/>
    <property type="match status" value="1"/>
</dbReference>
<dbReference type="PANTHER" id="PTHR43692:SF1">
    <property type="entry name" value="UDP-N-ACETYLMURAMOYLALANINE--D-GLUTAMATE LIGASE"/>
    <property type="match status" value="1"/>
</dbReference>
<dbReference type="Pfam" id="PF02875">
    <property type="entry name" value="Mur_ligase_C"/>
    <property type="match status" value="1"/>
</dbReference>
<dbReference type="Pfam" id="PF08245">
    <property type="entry name" value="Mur_ligase_M"/>
    <property type="match status" value="1"/>
</dbReference>
<dbReference type="Pfam" id="PF21799">
    <property type="entry name" value="MurD-like_N"/>
    <property type="match status" value="1"/>
</dbReference>
<dbReference type="SUPFAM" id="SSF51984">
    <property type="entry name" value="MurCD N-terminal domain"/>
    <property type="match status" value="1"/>
</dbReference>
<dbReference type="SUPFAM" id="SSF53623">
    <property type="entry name" value="MurD-like peptide ligases, catalytic domain"/>
    <property type="match status" value="1"/>
</dbReference>
<dbReference type="SUPFAM" id="SSF53244">
    <property type="entry name" value="MurD-like peptide ligases, peptide-binding domain"/>
    <property type="match status" value="1"/>
</dbReference>
<gene>
    <name evidence="1" type="primary">murD</name>
    <name type="ordered locus">Ppro_3291</name>
</gene>
<name>MURD_PELPD</name>
<feature type="chain" id="PRO_0000301446" description="UDP-N-acetylmuramoylalanine--D-glutamate ligase">
    <location>
        <begin position="1"/>
        <end position="446"/>
    </location>
</feature>
<feature type="binding site" evidence="1">
    <location>
        <begin position="115"/>
        <end position="121"/>
    </location>
    <ligand>
        <name>ATP</name>
        <dbReference type="ChEBI" id="CHEBI:30616"/>
    </ligand>
</feature>
<keyword id="KW-0067">ATP-binding</keyword>
<keyword id="KW-0131">Cell cycle</keyword>
<keyword id="KW-0132">Cell division</keyword>
<keyword id="KW-0133">Cell shape</keyword>
<keyword id="KW-0961">Cell wall biogenesis/degradation</keyword>
<keyword id="KW-0963">Cytoplasm</keyword>
<keyword id="KW-0436">Ligase</keyword>
<keyword id="KW-0547">Nucleotide-binding</keyword>
<keyword id="KW-0573">Peptidoglycan synthesis</keyword>
<keyword id="KW-1185">Reference proteome</keyword>
<accession>A1AU63</accession>